<gene>
    <name evidence="1" type="primary">thiG</name>
    <name type="ordered locus">BWG_3650</name>
</gene>
<organism>
    <name type="scientific">Escherichia coli (strain K12 / MC4100 / BW2952)</name>
    <dbReference type="NCBI Taxonomy" id="595496"/>
    <lineage>
        <taxon>Bacteria</taxon>
        <taxon>Pseudomonadati</taxon>
        <taxon>Pseudomonadota</taxon>
        <taxon>Gammaproteobacteria</taxon>
        <taxon>Enterobacterales</taxon>
        <taxon>Enterobacteriaceae</taxon>
        <taxon>Escherichia</taxon>
    </lineage>
</organism>
<evidence type="ECO:0000255" key="1">
    <source>
        <dbReference type="HAMAP-Rule" id="MF_00443"/>
    </source>
</evidence>
<dbReference type="EC" id="2.8.1.10" evidence="1"/>
<dbReference type="EMBL" id="CP001396">
    <property type="protein sequence ID" value="ACR65633.1"/>
    <property type="molecule type" value="Genomic_DNA"/>
</dbReference>
<dbReference type="RefSeq" id="WP_000944104.1">
    <property type="nucleotide sequence ID" value="NC_012759.1"/>
</dbReference>
<dbReference type="SMR" id="C5A0T1"/>
<dbReference type="KEGG" id="ebw:BWG_3650"/>
<dbReference type="HOGENOM" id="CLU_062233_1_0_6"/>
<dbReference type="UniPathway" id="UPA00060"/>
<dbReference type="GO" id="GO:0005737">
    <property type="term" value="C:cytoplasm"/>
    <property type="evidence" value="ECO:0007669"/>
    <property type="project" value="UniProtKB-SubCell"/>
</dbReference>
<dbReference type="GO" id="GO:1990107">
    <property type="term" value="F:thiazole synthase activity"/>
    <property type="evidence" value="ECO:0007669"/>
    <property type="project" value="UniProtKB-EC"/>
</dbReference>
<dbReference type="GO" id="GO:0009229">
    <property type="term" value="P:thiamine diphosphate biosynthetic process"/>
    <property type="evidence" value="ECO:0007669"/>
    <property type="project" value="UniProtKB-UniRule"/>
</dbReference>
<dbReference type="CDD" id="cd04728">
    <property type="entry name" value="ThiG"/>
    <property type="match status" value="1"/>
</dbReference>
<dbReference type="FunFam" id="3.20.20.70:FF:000049">
    <property type="entry name" value="Thiazole synthase"/>
    <property type="match status" value="1"/>
</dbReference>
<dbReference type="Gene3D" id="3.20.20.70">
    <property type="entry name" value="Aldolase class I"/>
    <property type="match status" value="1"/>
</dbReference>
<dbReference type="HAMAP" id="MF_00443">
    <property type="entry name" value="ThiG"/>
    <property type="match status" value="1"/>
</dbReference>
<dbReference type="InterPro" id="IPR013785">
    <property type="entry name" value="Aldolase_TIM"/>
</dbReference>
<dbReference type="InterPro" id="IPR033983">
    <property type="entry name" value="Thiazole_synthase_ThiG"/>
</dbReference>
<dbReference type="InterPro" id="IPR008867">
    <property type="entry name" value="ThiG"/>
</dbReference>
<dbReference type="PANTHER" id="PTHR34266">
    <property type="entry name" value="THIAZOLE SYNTHASE"/>
    <property type="match status" value="1"/>
</dbReference>
<dbReference type="PANTHER" id="PTHR34266:SF2">
    <property type="entry name" value="THIAZOLE SYNTHASE"/>
    <property type="match status" value="1"/>
</dbReference>
<dbReference type="Pfam" id="PF05690">
    <property type="entry name" value="ThiG"/>
    <property type="match status" value="1"/>
</dbReference>
<dbReference type="SUPFAM" id="SSF110399">
    <property type="entry name" value="ThiG-like"/>
    <property type="match status" value="1"/>
</dbReference>
<sequence>MLRIADKTFDSHLFTGTGKFASSQLMVEAIRASGSQLVTLAMKRVDLRQHNDAILEPLIAAGVTLLPNTSGAKTAEEAIFAAHLAREALGTNWLKLEIHPDARWLLPDPIETLKAAETLVQQGFVVLPYCGADPVLCKRLEEVGCAAVMPLGAPIGSNQGLETRAMLEIIIQQATVPVVVDAGIGVPSHAAQALEMGADAVLVNTAIAVADDPVNMAKAFRLAVEAGLLARQSGPGSRSYFAHATSPLTGFLEASA</sequence>
<feature type="chain" id="PRO_1000206132" description="Thiazole synthase">
    <location>
        <begin position="1"/>
        <end position="256"/>
    </location>
</feature>
<feature type="active site" description="Schiff-base intermediate with DXP" evidence="1">
    <location>
        <position position="95"/>
    </location>
</feature>
<feature type="binding site" evidence="1">
    <location>
        <position position="156"/>
    </location>
    <ligand>
        <name>1-deoxy-D-xylulose 5-phosphate</name>
        <dbReference type="ChEBI" id="CHEBI:57792"/>
    </ligand>
</feature>
<feature type="binding site" evidence="1">
    <location>
        <begin position="182"/>
        <end position="183"/>
    </location>
    <ligand>
        <name>1-deoxy-D-xylulose 5-phosphate</name>
        <dbReference type="ChEBI" id="CHEBI:57792"/>
    </ligand>
</feature>
<feature type="binding site" evidence="1">
    <location>
        <begin position="204"/>
        <end position="205"/>
    </location>
    <ligand>
        <name>1-deoxy-D-xylulose 5-phosphate</name>
        <dbReference type="ChEBI" id="CHEBI:57792"/>
    </ligand>
</feature>
<reference key="1">
    <citation type="journal article" date="2009" name="J. Bacteriol.">
        <title>Genomic sequencing reveals regulatory mutations and recombinational events in the widely used MC4100 lineage of Escherichia coli K-12.</title>
        <authorList>
            <person name="Ferenci T."/>
            <person name="Zhou Z."/>
            <person name="Betteridge T."/>
            <person name="Ren Y."/>
            <person name="Liu Y."/>
            <person name="Feng L."/>
            <person name="Reeves P.R."/>
            <person name="Wang L."/>
        </authorList>
    </citation>
    <scope>NUCLEOTIDE SEQUENCE [LARGE SCALE GENOMIC DNA]</scope>
    <source>
        <strain>K12 / MC4100 / BW2952</strain>
    </source>
</reference>
<proteinExistence type="inferred from homology"/>
<accession>C5A0T1</accession>
<name>THIG_ECOBW</name>
<keyword id="KW-0963">Cytoplasm</keyword>
<keyword id="KW-0704">Schiff base</keyword>
<keyword id="KW-0784">Thiamine biosynthesis</keyword>
<keyword id="KW-0808">Transferase</keyword>
<comment type="function">
    <text evidence="1">Catalyzes the rearrangement of 1-deoxy-D-xylulose 5-phosphate (DXP) to produce the thiazole phosphate moiety of thiamine. Sulfur is provided by the thiocarboxylate moiety of the carrier protein ThiS. In vitro, sulfur can be provided by H(2)S.</text>
</comment>
<comment type="catalytic activity">
    <reaction evidence="1">
        <text>[ThiS sulfur-carrier protein]-C-terminal-Gly-aminoethanethioate + 2-iminoacetate + 1-deoxy-D-xylulose 5-phosphate = [ThiS sulfur-carrier protein]-C-terminal Gly-Gly + 2-[(2R,5Z)-2-carboxy-4-methylthiazol-5(2H)-ylidene]ethyl phosphate + 2 H2O + H(+)</text>
        <dbReference type="Rhea" id="RHEA:26297"/>
        <dbReference type="Rhea" id="RHEA-COMP:12909"/>
        <dbReference type="Rhea" id="RHEA-COMP:19908"/>
        <dbReference type="ChEBI" id="CHEBI:15377"/>
        <dbReference type="ChEBI" id="CHEBI:15378"/>
        <dbReference type="ChEBI" id="CHEBI:57792"/>
        <dbReference type="ChEBI" id="CHEBI:62899"/>
        <dbReference type="ChEBI" id="CHEBI:77846"/>
        <dbReference type="ChEBI" id="CHEBI:90778"/>
        <dbReference type="ChEBI" id="CHEBI:232372"/>
        <dbReference type="EC" id="2.8.1.10"/>
    </reaction>
</comment>
<comment type="pathway">
    <text evidence="1">Cofactor biosynthesis; thiamine diphosphate biosynthesis.</text>
</comment>
<comment type="subunit">
    <text evidence="1">Homotetramer. Forms heterodimers with either ThiH or ThiS.</text>
</comment>
<comment type="subcellular location">
    <subcellularLocation>
        <location evidence="1">Cytoplasm</location>
    </subcellularLocation>
</comment>
<comment type="similarity">
    <text evidence="1">Belongs to the ThiG family.</text>
</comment>
<protein>
    <recommendedName>
        <fullName evidence="1">Thiazole synthase</fullName>
        <ecNumber evidence="1">2.8.1.10</ecNumber>
    </recommendedName>
</protein>